<organism>
    <name type="scientific">Bos taurus</name>
    <name type="common">Bovine</name>
    <dbReference type="NCBI Taxonomy" id="9913"/>
    <lineage>
        <taxon>Eukaryota</taxon>
        <taxon>Metazoa</taxon>
        <taxon>Chordata</taxon>
        <taxon>Craniata</taxon>
        <taxon>Vertebrata</taxon>
        <taxon>Euteleostomi</taxon>
        <taxon>Mammalia</taxon>
        <taxon>Eutheria</taxon>
        <taxon>Laurasiatheria</taxon>
        <taxon>Artiodactyla</taxon>
        <taxon>Ruminantia</taxon>
        <taxon>Pecora</taxon>
        <taxon>Bovidae</taxon>
        <taxon>Bovinae</taxon>
        <taxon>Bos</taxon>
    </lineage>
</organism>
<gene>
    <name type="primary">RPL24</name>
</gene>
<dbReference type="EMBL" id="AF063243">
    <property type="protein sequence ID" value="AAC16388.1"/>
    <property type="molecule type" value="mRNA"/>
</dbReference>
<dbReference type="EMBL" id="AB099001">
    <property type="protein sequence ID" value="BAC56491.1"/>
    <property type="molecule type" value="mRNA"/>
</dbReference>
<dbReference type="EMBL" id="AB099003">
    <property type="protein sequence ID" value="BAC56493.1"/>
    <property type="molecule type" value="mRNA"/>
</dbReference>
<dbReference type="EMBL" id="AB099007">
    <property type="protein sequence ID" value="BAC56497.1"/>
    <property type="molecule type" value="mRNA"/>
</dbReference>
<dbReference type="EMBL" id="BC102108">
    <property type="protein sequence ID" value="AAI02109.1"/>
    <property type="molecule type" value="mRNA"/>
</dbReference>
<dbReference type="RefSeq" id="NP_776880.1">
    <property type="nucleotide sequence ID" value="NM_174455.3"/>
</dbReference>
<dbReference type="SMR" id="Q862I1"/>
<dbReference type="FunCoup" id="Q862I1">
    <property type="interactions" value="2952"/>
</dbReference>
<dbReference type="IntAct" id="Q862I1">
    <property type="interactions" value="1"/>
</dbReference>
<dbReference type="STRING" id="9913.ENSBTAP00000017905"/>
<dbReference type="iPTMnet" id="Q862I1"/>
<dbReference type="PaxDb" id="9913-ENSBTAP00000017905"/>
<dbReference type="PeptideAtlas" id="Q862I1"/>
<dbReference type="Ensembl" id="ENSBTAT00000017905.5">
    <property type="protein sequence ID" value="ENSBTAP00000017905.3"/>
    <property type="gene ID" value="ENSBTAG00000013461.5"/>
</dbReference>
<dbReference type="GeneID" id="282048"/>
<dbReference type="KEGG" id="bta:282048"/>
<dbReference type="CTD" id="6152"/>
<dbReference type="VEuPathDB" id="HostDB:ENSBTAG00000013461"/>
<dbReference type="VGNC" id="VGNC:34113">
    <property type="gene designation" value="RPL24"/>
</dbReference>
<dbReference type="eggNOG" id="KOG1722">
    <property type="taxonomic scope" value="Eukaryota"/>
</dbReference>
<dbReference type="GeneTree" id="ENSGT00950000183105"/>
<dbReference type="HOGENOM" id="CLU_106411_1_0_1"/>
<dbReference type="InParanoid" id="Q862I1"/>
<dbReference type="OMA" id="PGHGKKM"/>
<dbReference type="OrthoDB" id="1727108at2759"/>
<dbReference type="TreeFam" id="TF312933"/>
<dbReference type="Reactome" id="R-BTA-156827">
    <property type="pathway name" value="L13a-mediated translational silencing of Ceruloplasmin expression"/>
</dbReference>
<dbReference type="Reactome" id="R-BTA-1799339">
    <property type="pathway name" value="SRP-dependent cotranslational protein targeting to membrane"/>
</dbReference>
<dbReference type="Reactome" id="R-BTA-6791226">
    <property type="pathway name" value="Major pathway of rRNA processing in the nucleolus and cytosol"/>
</dbReference>
<dbReference type="Reactome" id="R-BTA-72689">
    <property type="pathway name" value="Formation of a pool of free 40S subunits"/>
</dbReference>
<dbReference type="Reactome" id="R-BTA-72706">
    <property type="pathway name" value="GTP hydrolysis and joining of the 60S ribosomal subunit"/>
</dbReference>
<dbReference type="Reactome" id="R-BTA-975956">
    <property type="pathway name" value="Nonsense Mediated Decay (NMD) independent of the Exon Junction Complex (EJC)"/>
</dbReference>
<dbReference type="Reactome" id="R-BTA-975957">
    <property type="pathway name" value="Nonsense Mediated Decay (NMD) enhanced by the Exon Junction Complex (EJC)"/>
</dbReference>
<dbReference type="Proteomes" id="UP000009136">
    <property type="component" value="Chromosome 1"/>
</dbReference>
<dbReference type="Bgee" id="ENSBTAG00000013461">
    <property type="expression patterns" value="Expressed in isthmus of fallopian tube and 106 other cell types or tissues"/>
</dbReference>
<dbReference type="GO" id="GO:0022625">
    <property type="term" value="C:cytosolic large ribosomal subunit"/>
    <property type="evidence" value="ECO:0000318"/>
    <property type="project" value="GO_Central"/>
</dbReference>
<dbReference type="GO" id="GO:0003729">
    <property type="term" value="F:mRNA binding"/>
    <property type="evidence" value="ECO:0000318"/>
    <property type="project" value="GO_Central"/>
</dbReference>
<dbReference type="GO" id="GO:0003735">
    <property type="term" value="F:structural constituent of ribosome"/>
    <property type="evidence" value="ECO:0000250"/>
    <property type="project" value="UniProtKB"/>
</dbReference>
<dbReference type="GO" id="GO:0002181">
    <property type="term" value="P:cytoplasmic translation"/>
    <property type="evidence" value="ECO:0000250"/>
    <property type="project" value="UniProtKB"/>
</dbReference>
<dbReference type="CDD" id="cd00472">
    <property type="entry name" value="Ribosomal_L24e_L24"/>
    <property type="match status" value="1"/>
</dbReference>
<dbReference type="FunFam" id="2.30.170.20:FF:000004">
    <property type="entry name" value="60S ribosomal protein l24"/>
    <property type="match status" value="1"/>
</dbReference>
<dbReference type="Gene3D" id="6.10.250.1270">
    <property type="match status" value="1"/>
</dbReference>
<dbReference type="Gene3D" id="2.30.170.20">
    <property type="entry name" value="Ribosomal protein L24e"/>
    <property type="match status" value="1"/>
</dbReference>
<dbReference type="InterPro" id="IPR038630">
    <property type="entry name" value="L24e/L24_sf"/>
</dbReference>
<dbReference type="InterPro" id="IPR056366">
    <property type="entry name" value="Ribosomal_eL24"/>
</dbReference>
<dbReference type="InterPro" id="IPR000988">
    <property type="entry name" value="Ribosomal_eL24-rel_N"/>
</dbReference>
<dbReference type="InterPro" id="IPR023442">
    <property type="entry name" value="Ribosomal_eL24_CS"/>
</dbReference>
<dbReference type="InterPro" id="IPR011017">
    <property type="entry name" value="TRASH_dom"/>
</dbReference>
<dbReference type="PANTHER" id="PTHR10792">
    <property type="entry name" value="60S RIBOSOMAL PROTEIN L24"/>
    <property type="match status" value="1"/>
</dbReference>
<dbReference type="PANTHER" id="PTHR10792:SF1">
    <property type="entry name" value="RIBOSOMAL PROTEIN L24"/>
    <property type="match status" value="1"/>
</dbReference>
<dbReference type="Pfam" id="PF01246">
    <property type="entry name" value="Ribosomal_L24e"/>
    <property type="match status" value="1"/>
</dbReference>
<dbReference type="SMART" id="SM00746">
    <property type="entry name" value="TRASH"/>
    <property type="match status" value="1"/>
</dbReference>
<dbReference type="SUPFAM" id="SSF57716">
    <property type="entry name" value="Glucocorticoid receptor-like (DNA-binding domain)"/>
    <property type="match status" value="1"/>
</dbReference>
<dbReference type="PROSITE" id="PS01073">
    <property type="entry name" value="RIBOSOMAL_L24E"/>
    <property type="match status" value="1"/>
</dbReference>
<accession>Q862I1</accession>
<accession>P38663</accession>
<accession>Q3T157</accession>
<accession>Q862I5</accession>
<accession>Q862V7</accession>
<sequence length="157" mass="17779">MKVELCSFSGYKIYPGHGRRYARTDGKVFQFLNAKCESAFLSKRNPRQINWTVLYRRKHKKGQSEEIQKKRTRRAVKFQRAITGASLADIMAKRNQKPEVRKAQREQAIRAAKEAKKAKQASKKTAMAAAKAPTKAAPKQKIVKPVKVSAPRVGGKR</sequence>
<protein>
    <recommendedName>
        <fullName evidence="4">Large ribosomal subunit protein eL24</fullName>
    </recommendedName>
    <alternativeName>
        <fullName>60S ribosomal protein L24</fullName>
    </alternativeName>
    <alternativeName>
        <fullName>Ribosomal protein L30</fullName>
    </alternativeName>
</protein>
<feature type="chain" id="PRO_0000136865" description="Large ribosomal subunit protein eL24">
    <location>
        <begin position="1"/>
        <end position="157"/>
    </location>
</feature>
<feature type="region of interest" description="Disordered" evidence="3">
    <location>
        <begin position="106"/>
        <end position="157"/>
    </location>
</feature>
<feature type="compositionally biased region" description="Basic and acidic residues" evidence="3">
    <location>
        <begin position="106"/>
        <end position="117"/>
    </location>
</feature>
<feature type="compositionally biased region" description="Low complexity" evidence="3">
    <location>
        <begin position="123"/>
        <end position="140"/>
    </location>
</feature>
<feature type="modified residue" description="ADP-ribosyl glutamic acid" evidence="1">
    <location>
        <position position="4"/>
    </location>
</feature>
<feature type="modified residue" description="N6-acetyllysine; alternate" evidence="1">
    <location>
        <position position="27"/>
    </location>
</feature>
<feature type="modified residue" description="N6-acetyllysine" evidence="1">
    <location>
        <position position="77"/>
    </location>
</feature>
<feature type="modified residue" description="Phosphothreonine" evidence="1">
    <location>
        <position position="83"/>
    </location>
</feature>
<feature type="modified residue" description="Phosphoserine" evidence="1">
    <location>
        <position position="86"/>
    </location>
</feature>
<feature type="modified residue" description="N6-acetyllysine" evidence="1">
    <location>
        <position position="93"/>
    </location>
</feature>
<feature type="modified residue" description="N6-succinyllysine" evidence="2">
    <location>
        <position position="131"/>
    </location>
</feature>
<feature type="modified residue" description="Phosphoserine" evidence="1">
    <location>
        <position position="149"/>
    </location>
</feature>
<feature type="cross-link" description="Glycyl lysine isopeptide (Lys-Gly) (interchain with G-Cter in SUMO2)" evidence="1">
    <location>
        <position position="2"/>
    </location>
</feature>
<feature type="cross-link" description="Glycyl lysine isopeptide (Lys-Gly) (interchain with G-Cter in SUMO2); alternate" evidence="1">
    <location>
        <position position="27"/>
    </location>
</feature>
<feature type="cross-link" description="Glycyl lysine isopeptide (Lys-Gly) (interchain with G-Cter in SUMO2)" evidence="1">
    <location>
        <position position="35"/>
    </location>
</feature>
<feature type="cross-link" description="Glycyl lysine isopeptide (Lys-Gly) (interchain with G-Cter in SUMO2)" evidence="1">
    <location>
        <position position="147"/>
    </location>
</feature>
<feature type="sequence conflict" description="In Ref. 2; BAC56493." evidence="4" ref="2">
    <original>K</original>
    <variation>E</variation>
    <location>
        <position position="2"/>
    </location>
</feature>
<feature type="sequence conflict" description="In Ref. 2; BAC56497." evidence="4" ref="2">
    <original>VGGKR</original>
    <variation>SLGGK</variation>
    <location>
        <begin position="153"/>
        <end position="157"/>
    </location>
</feature>
<keyword id="KW-0007">Acetylation</keyword>
<keyword id="KW-0013">ADP-ribosylation</keyword>
<keyword id="KW-0963">Cytoplasm</keyword>
<keyword id="KW-1017">Isopeptide bond</keyword>
<keyword id="KW-0597">Phosphoprotein</keyword>
<keyword id="KW-1185">Reference proteome</keyword>
<keyword id="KW-0687">Ribonucleoprotein</keyword>
<keyword id="KW-0689">Ribosomal protein</keyword>
<keyword id="KW-0832">Ubl conjugation</keyword>
<reference key="1">
    <citation type="submission" date="1998-05" db="EMBL/GenBank/DDBJ databases">
        <title>Expression of ribosomal protein gene L30 in bovine oocytes and early embryos.</title>
        <authorList>
            <person name="Bilodeau-Goeseels S."/>
            <person name="Prenevost K.D."/>
            <person name="Schultz G.A."/>
        </authorList>
    </citation>
    <scope>NUCLEOTIDE SEQUENCE [MRNA]</scope>
    <source>
        <tissue>Embryo</tissue>
    </source>
</reference>
<reference key="2">
    <citation type="journal article" date="2003" name="Mol. Reprod. Dev.">
        <title>Characterization of gene expression profiles in early bovine pregnancy using a custom cDNA microarray.</title>
        <authorList>
            <person name="Ishiwata H."/>
            <person name="Katsuma S."/>
            <person name="Kizaki K."/>
            <person name="Patel O.V."/>
            <person name="Nakano H."/>
            <person name="Takahashi T."/>
            <person name="Imai K."/>
            <person name="Hirasawa A."/>
            <person name="Shiojima S."/>
            <person name="Ikawa H."/>
            <person name="Suzuki Y."/>
            <person name="Tsujimoto G."/>
            <person name="Izaike Y."/>
            <person name="Todoroki J."/>
            <person name="Hashizume K."/>
        </authorList>
    </citation>
    <scope>NUCLEOTIDE SEQUENCE [MRNA]</scope>
</reference>
<reference key="3">
    <citation type="submission" date="2005-08" db="EMBL/GenBank/DDBJ databases">
        <authorList>
            <consortium name="NIH - Mammalian Gene Collection (MGC) project"/>
        </authorList>
    </citation>
    <scope>NUCLEOTIDE SEQUENCE [LARGE SCALE MRNA]</scope>
    <source>
        <strain>Crossbred X Angus</strain>
        <tissue>Ileum</tissue>
    </source>
</reference>
<name>RL24_BOVIN</name>
<proteinExistence type="evidence at transcript level"/>
<evidence type="ECO:0000250" key="1">
    <source>
        <dbReference type="UniProtKB" id="P83731"/>
    </source>
</evidence>
<evidence type="ECO:0000250" key="2">
    <source>
        <dbReference type="UniProtKB" id="Q8BP67"/>
    </source>
</evidence>
<evidence type="ECO:0000256" key="3">
    <source>
        <dbReference type="SAM" id="MobiDB-lite"/>
    </source>
</evidence>
<evidence type="ECO:0000305" key="4"/>
<comment type="function">
    <text evidence="1">Component of the large ribosomal subunit. The ribosome is a large ribonucleoprotein complex responsible for the synthesis of proteins in the cell.</text>
</comment>
<comment type="subunit">
    <text evidence="1">Component of the large ribosomal subunit.</text>
</comment>
<comment type="subcellular location">
    <subcellularLocation>
        <location evidence="1">Cytoplasm</location>
    </subcellularLocation>
</comment>
<comment type="PTM">
    <text evidence="1">Mono-ADP-ribosylation at Glu-4 by PARP16 inhibits polysome assembly and mRNA loading, thereby inhibiting protein translation.</text>
</comment>
<comment type="similarity">
    <text evidence="4">Belongs to the eukaryotic ribosomal protein eL24 family.</text>
</comment>